<protein>
    <recommendedName>
        <fullName evidence="1">Chaperonin GroEL</fullName>
        <ecNumber evidence="1">5.6.1.7</ecNumber>
    </recommendedName>
    <alternativeName>
        <fullName evidence="1">60 kDa chaperonin</fullName>
    </alternativeName>
    <alternativeName>
        <fullName evidence="1">Chaperonin-60</fullName>
        <shortName evidence="1">Cpn60</shortName>
    </alternativeName>
</protein>
<keyword id="KW-0067">ATP-binding</keyword>
<keyword id="KW-0143">Chaperone</keyword>
<keyword id="KW-0963">Cytoplasm</keyword>
<keyword id="KW-0413">Isomerase</keyword>
<keyword id="KW-0547">Nucleotide-binding</keyword>
<keyword id="KW-0346">Stress response</keyword>
<name>CH60_BACP3</name>
<comment type="function">
    <text evidence="1">Together with its co-chaperonin GroES, plays an essential role in assisting protein folding. The GroEL-GroES system forms a nano-cage that allows encapsulation of the non-native substrate proteins and provides a physical environment optimized to promote and accelerate protein folding.</text>
</comment>
<comment type="catalytic activity">
    <reaction evidence="1">
        <text>ATP + H2O + a folded polypeptide = ADP + phosphate + an unfolded polypeptide.</text>
        <dbReference type="EC" id="5.6.1.7"/>
    </reaction>
</comment>
<comment type="subunit">
    <text evidence="1">Forms a cylinder of 14 subunits composed of two heptameric rings stacked back-to-back. Interacts with the co-chaperonin GroES.</text>
</comment>
<comment type="subcellular location">
    <subcellularLocation>
        <location evidence="1">Cytoplasm</location>
    </subcellularLocation>
</comment>
<comment type="similarity">
    <text evidence="1">Belongs to the chaperonin (HSP60) family.</text>
</comment>
<feature type="chain" id="PRO_0000063276" description="Chaperonin GroEL">
    <location>
        <begin position="1"/>
        <end position="538"/>
    </location>
</feature>
<feature type="binding site" evidence="1">
    <location>
        <begin position="29"/>
        <end position="32"/>
    </location>
    <ligand>
        <name>ATP</name>
        <dbReference type="ChEBI" id="CHEBI:30616"/>
    </ligand>
</feature>
<feature type="binding site" evidence="1">
    <location>
        <begin position="86"/>
        <end position="90"/>
    </location>
    <ligand>
        <name>ATP</name>
        <dbReference type="ChEBI" id="CHEBI:30616"/>
    </ligand>
</feature>
<feature type="binding site" evidence="1">
    <location>
        <position position="413"/>
    </location>
    <ligand>
        <name>ATP</name>
        <dbReference type="ChEBI" id="CHEBI:30616"/>
    </ligand>
</feature>
<feature type="binding site" evidence="1">
    <location>
        <begin position="476"/>
        <end position="478"/>
    </location>
    <ligand>
        <name>ATP</name>
        <dbReference type="ChEBI" id="CHEBI:30616"/>
    </ligand>
</feature>
<feature type="binding site" evidence="1">
    <location>
        <position position="492"/>
    </location>
    <ligand>
        <name>ATP</name>
        <dbReference type="ChEBI" id="CHEBI:30616"/>
    </ligand>
</feature>
<evidence type="ECO:0000255" key="1">
    <source>
        <dbReference type="HAMAP-Rule" id="MF_00600"/>
    </source>
</evidence>
<proteinExistence type="inferred from homology"/>
<accession>P26209</accession>
<sequence length="538" mass="57183">MAKQIKFSEEARRAMLRGVDKLADAVKVTLGPKGRNVVLEKKFGSPLITNDGVTIAKEIELEDPFENMGAKLVAEVASKTNDIAGDGTTTATVLAQAMIREGLKNVAAGANPMGIRRGIEKAVAVAVEELKAISKPIKGKESIAQVAAISAADEEVGQLIAEAMERVGNDGVITLEESKGFTTELDVVEGMQFDRGYVSPNMITDTEKMEAVLENPYILITDKKVSSIQELLPALEQVVQQGRPLLIIAEDVEGEALATLVVNKLRGTFNAVRVKAPGFGDRRKAMLEDIAILTGGEVISEELGRELKSTTIASLGRASKVVVTKETTTIVEGAGDSKRIKAAINQIRAQLKETTSEFDREKLQERLAKLAGGVAVIKVGAATETELKERKLRIEDALNSTRAAVEEGIGAGGGTALMNIHNKVAAIEAEGDEATGVKIVLRAIEEPVRQIAQNAGLEGSIIVERLKNEKPGIGFNAATGEWVDMIEAGIVDPTKVTRSALQNAASVAAMVLTTEACVADKPEENKGNNNMPDMGGMM</sequence>
<gene>
    <name evidence="1" type="primary">groEL</name>
    <name evidence="1" type="synonym">groL</name>
    <name type="synonym">mopA</name>
</gene>
<organism>
    <name type="scientific">Bacillus sp. (strain PS3)</name>
    <dbReference type="NCBI Taxonomy" id="2334"/>
    <lineage>
        <taxon>Bacteria</taxon>
        <taxon>Bacillati</taxon>
        <taxon>Bacillota</taxon>
        <taxon>Bacilli</taxon>
        <taxon>Bacillales</taxon>
        <taxon>Bacillaceae</taxon>
        <taxon>Bacillus</taxon>
    </lineage>
</organism>
<dbReference type="EC" id="5.6.1.7" evidence="1"/>
<dbReference type="EMBL" id="S57424">
    <property type="protein sequence ID" value="AAB25915.2"/>
    <property type="status" value="ALT_SEQ"/>
    <property type="molecule type" value="Genomic_DNA"/>
</dbReference>
<dbReference type="PIR" id="JQ1195">
    <property type="entry name" value="JQ1195"/>
</dbReference>
<dbReference type="SMR" id="P26209"/>
<dbReference type="GO" id="GO:0005737">
    <property type="term" value="C:cytoplasm"/>
    <property type="evidence" value="ECO:0007669"/>
    <property type="project" value="UniProtKB-SubCell"/>
</dbReference>
<dbReference type="GO" id="GO:0005524">
    <property type="term" value="F:ATP binding"/>
    <property type="evidence" value="ECO:0007669"/>
    <property type="project" value="UniProtKB-UniRule"/>
</dbReference>
<dbReference type="GO" id="GO:0140662">
    <property type="term" value="F:ATP-dependent protein folding chaperone"/>
    <property type="evidence" value="ECO:0007669"/>
    <property type="project" value="InterPro"/>
</dbReference>
<dbReference type="GO" id="GO:0016853">
    <property type="term" value="F:isomerase activity"/>
    <property type="evidence" value="ECO:0007669"/>
    <property type="project" value="UniProtKB-KW"/>
</dbReference>
<dbReference type="GO" id="GO:0051082">
    <property type="term" value="F:unfolded protein binding"/>
    <property type="evidence" value="ECO:0007669"/>
    <property type="project" value="UniProtKB-UniRule"/>
</dbReference>
<dbReference type="GO" id="GO:0042026">
    <property type="term" value="P:protein refolding"/>
    <property type="evidence" value="ECO:0007669"/>
    <property type="project" value="UniProtKB-UniRule"/>
</dbReference>
<dbReference type="CDD" id="cd03344">
    <property type="entry name" value="GroEL"/>
    <property type="match status" value="1"/>
</dbReference>
<dbReference type="FunFam" id="1.10.560.10:FF:000001">
    <property type="entry name" value="60 kDa chaperonin"/>
    <property type="match status" value="1"/>
</dbReference>
<dbReference type="FunFam" id="3.50.7.10:FF:000001">
    <property type="entry name" value="60 kDa chaperonin"/>
    <property type="match status" value="1"/>
</dbReference>
<dbReference type="Gene3D" id="3.50.7.10">
    <property type="entry name" value="GroEL"/>
    <property type="match status" value="1"/>
</dbReference>
<dbReference type="Gene3D" id="1.10.560.10">
    <property type="entry name" value="GroEL-like equatorial domain"/>
    <property type="match status" value="1"/>
</dbReference>
<dbReference type="Gene3D" id="3.30.260.10">
    <property type="entry name" value="TCP-1-like chaperonin intermediate domain"/>
    <property type="match status" value="1"/>
</dbReference>
<dbReference type="HAMAP" id="MF_00600">
    <property type="entry name" value="CH60"/>
    <property type="match status" value="1"/>
</dbReference>
<dbReference type="InterPro" id="IPR018370">
    <property type="entry name" value="Chaperonin_Cpn60_CS"/>
</dbReference>
<dbReference type="InterPro" id="IPR001844">
    <property type="entry name" value="Cpn60/GroEL"/>
</dbReference>
<dbReference type="InterPro" id="IPR002423">
    <property type="entry name" value="Cpn60/GroEL/TCP-1"/>
</dbReference>
<dbReference type="InterPro" id="IPR027409">
    <property type="entry name" value="GroEL-like_apical_dom_sf"/>
</dbReference>
<dbReference type="InterPro" id="IPR027413">
    <property type="entry name" value="GROEL-like_equatorial_sf"/>
</dbReference>
<dbReference type="InterPro" id="IPR027410">
    <property type="entry name" value="TCP-1-like_intermed_sf"/>
</dbReference>
<dbReference type="NCBIfam" id="TIGR02348">
    <property type="entry name" value="GroEL"/>
    <property type="match status" value="1"/>
</dbReference>
<dbReference type="NCBIfam" id="NF000592">
    <property type="entry name" value="PRK00013.1"/>
    <property type="match status" value="1"/>
</dbReference>
<dbReference type="NCBIfam" id="NF009487">
    <property type="entry name" value="PRK12849.1"/>
    <property type="match status" value="1"/>
</dbReference>
<dbReference type="NCBIfam" id="NF009488">
    <property type="entry name" value="PRK12850.1"/>
    <property type="match status" value="1"/>
</dbReference>
<dbReference type="NCBIfam" id="NF009489">
    <property type="entry name" value="PRK12851.1"/>
    <property type="match status" value="1"/>
</dbReference>
<dbReference type="PANTHER" id="PTHR45633">
    <property type="entry name" value="60 KDA HEAT SHOCK PROTEIN, MITOCHONDRIAL"/>
    <property type="match status" value="1"/>
</dbReference>
<dbReference type="Pfam" id="PF00118">
    <property type="entry name" value="Cpn60_TCP1"/>
    <property type="match status" value="1"/>
</dbReference>
<dbReference type="PRINTS" id="PR00298">
    <property type="entry name" value="CHAPERONIN60"/>
</dbReference>
<dbReference type="SUPFAM" id="SSF52029">
    <property type="entry name" value="GroEL apical domain-like"/>
    <property type="match status" value="1"/>
</dbReference>
<dbReference type="SUPFAM" id="SSF48592">
    <property type="entry name" value="GroEL equatorial domain-like"/>
    <property type="match status" value="1"/>
</dbReference>
<dbReference type="SUPFAM" id="SSF54849">
    <property type="entry name" value="GroEL-intermediate domain like"/>
    <property type="match status" value="1"/>
</dbReference>
<dbReference type="PROSITE" id="PS00296">
    <property type="entry name" value="CHAPERONINS_CPN60"/>
    <property type="match status" value="1"/>
</dbReference>
<reference key="1">
    <citation type="journal article" date="1991" name="Biochem. Biophys. Res. Commun.">
        <title>Gene structure of heat shock proteins 61KDa and 12KDa (thermophilic chaperonins) of thermophilic bacterium PS3.</title>
        <authorList>
            <person name="Tamada H."/>
            <person name="Ohta T."/>
            <person name="Hamamoto T."/>
            <person name="Otawara-Hamamoto Y."/>
            <person name="Yanagi M."/>
            <person name="Hiraiwa H."/>
            <person name="Hirata H."/>
            <person name="Kagawa Y."/>
        </authorList>
    </citation>
    <scope>NUCLEOTIDE SEQUENCE [GENOMIC DNA]</scope>
</reference>